<evidence type="ECO:0000256" key="1">
    <source>
        <dbReference type="SAM" id="MobiDB-lite"/>
    </source>
</evidence>
<evidence type="ECO:0000305" key="2"/>
<feature type="chain" id="PRO_0000405325" description="Putative uncharacterized protein ATP1A1-AS1">
    <location>
        <begin position="1"/>
        <end position="95"/>
    </location>
</feature>
<feature type="region of interest" description="Disordered" evidence="1">
    <location>
        <begin position="1"/>
        <end position="73"/>
    </location>
</feature>
<feature type="compositionally biased region" description="Polar residues" evidence="1">
    <location>
        <begin position="42"/>
        <end position="52"/>
    </location>
</feature>
<feature type="compositionally biased region" description="Polar residues" evidence="1">
    <location>
        <begin position="62"/>
        <end position="73"/>
    </location>
</feature>
<protein>
    <recommendedName>
        <fullName>Putative uncharacterized protein ATP1A1-AS1</fullName>
    </recommendedName>
    <alternativeName>
        <fullName>ATP1A1 antisense RNA 1</fullName>
    </alternativeName>
    <alternativeName>
        <fullName>ATP1A1 antisense gene protein 1</fullName>
    </alternativeName>
    <alternativeName>
        <fullName>ATP1A1 opposite strand protein</fullName>
    </alternativeName>
</protein>
<comment type="caution">
    <text evidence="2">Product of a dubious gene prediction.</text>
</comment>
<proteinExistence type="uncertain"/>
<accession>Q5TC04</accession>
<organism>
    <name type="scientific">Homo sapiens</name>
    <name type="common">Human</name>
    <dbReference type="NCBI Taxonomy" id="9606"/>
    <lineage>
        <taxon>Eukaryota</taxon>
        <taxon>Metazoa</taxon>
        <taxon>Chordata</taxon>
        <taxon>Craniata</taxon>
        <taxon>Vertebrata</taxon>
        <taxon>Euteleostomi</taxon>
        <taxon>Mammalia</taxon>
        <taxon>Eutheria</taxon>
        <taxon>Euarchontoglires</taxon>
        <taxon>Primates</taxon>
        <taxon>Haplorrhini</taxon>
        <taxon>Catarrhini</taxon>
        <taxon>Hominidae</taxon>
        <taxon>Homo</taxon>
    </lineage>
</organism>
<dbReference type="EMBL" id="AL136376">
    <property type="status" value="NOT_ANNOTATED_CDS"/>
    <property type="molecule type" value="Genomic_DNA"/>
</dbReference>
<dbReference type="EMBL" id="BC069003">
    <property type="status" value="NOT_ANNOTATED_CDS"/>
    <property type="molecule type" value="mRNA"/>
</dbReference>
<dbReference type="BioMuta" id="HGNC:28262"/>
<dbReference type="TopDownProteomics" id="Q5TC04"/>
<dbReference type="AGR" id="HGNC:28262"/>
<dbReference type="GeneCards" id="ATP1A1-AS1"/>
<dbReference type="HGNC" id="HGNC:28262">
    <property type="gene designation" value="ATP1A1-AS1"/>
</dbReference>
<dbReference type="MalaCards" id="ATP1A1-AS1"/>
<dbReference type="neXtProt" id="NX_Q5TC04"/>
<dbReference type="InParanoid" id="Q5TC04"/>
<dbReference type="PAN-GO" id="Q5TC04">
    <property type="GO annotations" value="0 GO annotations based on evolutionary models"/>
</dbReference>
<dbReference type="PhylomeDB" id="Q5TC04"/>
<dbReference type="ChiTaRS" id="ATP1A1-AS1">
    <property type="organism name" value="human"/>
</dbReference>
<dbReference type="Pharos" id="Q5TC04">
    <property type="development level" value="Tdark"/>
</dbReference>
<dbReference type="Proteomes" id="UP000005640">
    <property type="component" value="Unplaced"/>
</dbReference>
<dbReference type="RNAct" id="Q5TC04">
    <property type="molecule type" value="protein"/>
</dbReference>
<gene>
    <name type="primary">ATP1A1-AS1</name>
    <name type="synonym">ATP1A1OS</name>
    <name type="synonym">C1orf203</name>
</gene>
<reference key="1">
    <citation type="journal article" date="2006" name="Nature">
        <title>The DNA sequence and biological annotation of human chromosome 1.</title>
        <authorList>
            <person name="Gregory S.G."/>
            <person name="Barlow K.F."/>
            <person name="McLay K.E."/>
            <person name="Kaul R."/>
            <person name="Swarbreck D."/>
            <person name="Dunham A."/>
            <person name="Scott C.E."/>
            <person name="Howe K.L."/>
            <person name="Woodfine K."/>
            <person name="Spencer C.C.A."/>
            <person name="Jones M.C."/>
            <person name="Gillson C."/>
            <person name="Searle S."/>
            <person name="Zhou Y."/>
            <person name="Kokocinski F."/>
            <person name="McDonald L."/>
            <person name="Evans R."/>
            <person name="Phillips K."/>
            <person name="Atkinson A."/>
            <person name="Cooper R."/>
            <person name="Jones C."/>
            <person name="Hall R.E."/>
            <person name="Andrews T.D."/>
            <person name="Lloyd C."/>
            <person name="Ainscough R."/>
            <person name="Almeida J.P."/>
            <person name="Ambrose K.D."/>
            <person name="Anderson F."/>
            <person name="Andrew R.W."/>
            <person name="Ashwell R.I.S."/>
            <person name="Aubin K."/>
            <person name="Babbage A.K."/>
            <person name="Bagguley C.L."/>
            <person name="Bailey J."/>
            <person name="Beasley H."/>
            <person name="Bethel G."/>
            <person name="Bird C.P."/>
            <person name="Bray-Allen S."/>
            <person name="Brown J.Y."/>
            <person name="Brown A.J."/>
            <person name="Buckley D."/>
            <person name="Burton J."/>
            <person name="Bye J."/>
            <person name="Carder C."/>
            <person name="Chapman J.C."/>
            <person name="Clark S.Y."/>
            <person name="Clarke G."/>
            <person name="Clee C."/>
            <person name="Cobley V."/>
            <person name="Collier R.E."/>
            <person name="Corby N."/>
            <person name="Coville G.J."/>
            <person name="Davies J."/>
            <person name="Deadman R."/>
            <person name="Dunn M."/>
            <person name="Earthrowl M."/>
            <person name="Ellington A.G."/>
            <person name="Errington H."/>
            <person name="Frankish A."/>
            <person name="Frankland J."/>
            <person name="French L."/>
            <person name="Garner P."/>
            <person name="Garnett J."/>
            <person name="Gay L."/>
            <person name="Ghori M.R.J."/>
            <person name="Gibson R."/>
            <person name="Gilby L.M."/>
            <person name="Gillett W."/>
            <person name="Glithero R.J."/>
            <person name="Grafham D.V."/>
            <person name="Griffiths C."/>
            <person name="Griffiths-Jones S."/>
            <person name="Grocock R."/>
            <person name="Hammond S."/>
            <person name="Harrison E.S.I."/>
            <person name="Hart E."/>
            <person name="Haugen E."/>
            <person name="Heath P.D."/>
            <person name="Holmes S."/>
            <person name="Holt K."/>
            <person name="Howden P.J."/>
            <person name="Hunt A.R."/>
            <person name="Hunt S.E."/>
            <person name="Hunter G."/>
            <person name="Isherwood J."/>
            <person name="James R."/>
            <person name="Johnson C."/>
            <person name="Johnson D."/>
            <person name="Joy A."/>
            <person name="Kay M."/>
            <person name="Kershaw J.K."/>
            <person name="Kibukawa M."/>
            <person name="Kimberley A.M."/>
            <person name="King A."/>
            <person name="Knights A.J."/>
            <person name="Lad H."/>
            <person name="Laird G."/>
            <person name="Lawlor S."/>
            <person name="Leongamornlert D.A."/>
            <person name="Lloyd D.M."/>
            <person name="Loveland J."/>
            <person name="Lovell J."/>
            <person name="Lush M.J."/>
            <person name="Lyne R."/>
            <person name="Martin S."/>
            <person name="Mashreghi-Mohammadi M."/>
            <person name="Matthews L."/>
            <person name="Matthews N.S.W."/>
            <person name="McLaren S."/>
            <person name="Milne S."/>
            <person name="Mistry S."/>
            <person name="Moore M.J.F."/>
            <person name="Nickerson T."/>
            <person name="O'Dell C.N."/>
            <person name="Oliver K."/>
            <person name="Palmeiri A."/>
            <person name="Palmer S.A."/>
            <person name="Parker A."/>
            <person name="Patel D."/>
            <person name="Pearce A.V."/>
            <person name="Peck A.I."/>
            <person name="Pelan S."/>
            <person name="Phelps K."/>
            <person name="Phillimore B.J."/>
            <person name="Plumb R."/>
            <person name="Rajan J."/>
            <person name="Raymond C."/>
            <person name="Rouse G."/>
            <person name="Saenphimmachak C."/>
            <person name="Sehra H.K."/>
            <person name="Sheridan E."/>
            <person name="Shownkeen R."/>
            <person name="Sims S."/>
            <person name="Skuce C.D."/>
            <person name="Smith M."/>
            <person name="Steward C."/>
            <person name="Subramanian S."/>
            <person name="Sycamore N."/>
            <person name="Tracey A."/>
            <person name="Tromans A."/>
            <person name="Van Helmond Z."/>
            <person name="Wall M."/>
            <person name="Wallis J.M."/>
            <person name="White S."/>
            <person name="Whitehead S.L."/>
            <person name="Wilkinson J.E."/>
            <person name="Willey D.L."/>
            <person name="Williams H."/>
            <person name="Wilming L."/>
            <person name="Wray P.W."/>
            <person name="Wu Z."/>
            <person name="Coulson A."/>
            <person name="Vaudin M."/>
            <person name="Sulston J.E."/>
            <person name="Durbin R.M."/>
            <person name="Hubbard T."/>
            <person name="Wooster R."/>
            <person name="Dunham I."/>
            <person name="Carter N.P."/>
            <person name="McVean G."/>
            <person name="Ross M.T."/>
            <person name="Harrow J."/>
            <person name="Olson M.V."/>
            <person name="Beck S."/>
            <person name="Rogers J."/>
            <person name="Bentley D.R."/>
        </authorList>
    </citation>
    <scope>NUCLEOTIDE SEQUENCE [LARGE SCALE GENOMIC DNA]</scope>
</reference>
<reference key="2">
    <citation type="journal article" date="2004" name="Genome Res.">
        <title>The status, quality, and expansion of the NIH full-length cDNA project: the Mammalian Gene Collection (MGC).</title>
        <authorList>
            <consortium name="The MGC Project Team"/>
        </authorList>
    </citation>
    <scope>NUCLEOTIDE SEQUENCE [LARGE SCALE MRNA]</scope>
</reference>
<keyword id="KW-1185">Reference proteome</keyword>
<sequence>MAHFKDDLQTNVEIIPGESAPRKESPRPPAPPSSAAGVGGCSNHSPSVQESPLSPPALAQLGSAQQPSMRTELSFSEKKDTMIIWQITITVWCQR</sequence>
<name>ATAS1_HUMAN</name>